<dbReference type="EC" id="4.2.2.n2" evidence="1"/>
<dbReference type="EMBL" id="CP000783">
    <property type="protein sequence ID" value="ABU76733.1"/>
    <property type="status" value="ALT_INIT"/>
    <property type="molecule type" value="Genomic_DNA"/>
</dbReference>
<dbReference type="RefSeq" id="WP_007775739.1">
    <property type="nucleotide sequence ID" value="NC_009778.1"/>
</dbReference>
<dbReference type="SMR" id="A7MKC3"/>
<dbReference type="CAZy" id="GH23">
    <property type="family name" value="Glycoside Hydrolase Family 23"/>
</dbReference>
<dbReference type="GeneID" id="56730333"/>
<dbReference type="KEGG" id="esa:ESA_01475"/>
<dbReference type="HOGENOM" id="CLU_103257_0_0_6"/>
<dbReference type="Proteomes" id="UP000000260">
    <property type="component" value="Chromosome"/>
</dbReference>
<dbReference type="GO" id="GO:0009279">
    <property type="term" value="C:cell outer membrane"/>
    <property type="evidence" value="ECO:0007669"/>
    <property type="project" value="UniProtKB-SubCell"/>
</dbReference>
<dbReference type="GO" id="GO:0008932">
    <property type="term" value="F:lytic endotransglycosylase activity"/>
    <property type="evidence" value="ECO:0007669"/>
    <property type="project" value="InterPro"/>
</dbReference>
<dbReference type="GO" id="GO:0016998">
    <property type="term" value="P:cell wall macromolecule catabolic process"/>
    <property type="evidence" value="ECO:0007669"/>
    <property type="project" value="UniProtKB-UniRule"/>
</dbReference>
<dbReference type="GO" id="GO:0071555">
    <property type="term" value="P:cell wall organization"/>
    <property type="evidence" value="ECO:0007669"/>
    <property type="project" value="UniProtKB-KW"/>
</dbReference>
<dbReference type="GO" id="GO:0000270">
    <property type="term" value="P:peptidoglycan metabolic process"/>
    <property type="evidence" value="ECO:0007669"/>
    <property type="project" value="InterPro"/>
</dbReference>
<dbReference type="CDD" id="cd16893">
    <property type="entry name" value="LT_MltC_MltE"/>
    <property type="match status" value="1"/>
</dbReference>
<dbReference type="Gene3D" id="1.10.530.10">
    <property type="match status" value="1"/>
</dbReference>
<dbReference type="HAMAP" id="MF_01381">
    <property type="entry name" value="EmtA"/>
    <property type="match status" value="1"/>
</dbReference>
<dbReference type="InterPro" id="IPR023946">
    <property type="entry name" value="EmtA"/>
</dbReference>
<dbReference type="InterPro" id="IPR023346">
    <property type="entry name" value="Lysozyme-like_dom_sf"/>
</dbReference>
<dbReference type="InterPro" id="IPR000189">
    <property type="entry name" value="Transglyc_AS"/>
</dbReference>
<dbReference type="InterPro" id="IPR008258">
    <property type="entry name" value="Transglycosylase_SLT_dom_1"/>
</dbReference>
<dbReference type="NCBIfam" id="NF012014">
    <property type="entry name" value="PRK15470.1"/>
    <property type="match status" value="1"/>
</dbReference>
<dbReference type="PANTHER" id="PTHR37423:SF4">
    <property type="entry name" value="ENDO-TYPE MEMBRANE-BOUND LYTIC MUREIN TRANSGLYCOSYLASE A"/>
    <property type="match status" value="1"/>
</dbReference>
<dbReference type="PANTHER" id="PTHR37423">
    <property type="entry name" value="SOLUBLE LYTIC MUREIN TRANSGLYCOSYLASE-RELATED"/>
    <property type="match status" value="1"/>
</dbReference>
<dbReference type="Pfam" id="PF01464">
    <property type="entry name" value="SLT"/>
    <property type="match status" value="1"/>
</dbReference>
<dbReference type="SUPFAM" id="SSF53955">
    <property type="entry name" value="Lysozyme-like"/>
    <property type="match status" value="1"/>
</dbReference>
<dbReference type="PROSITE" id="PS51257">
    <property type="entry name" value="PROKAR_LIPOPROTEIN"/>
    <property type="match status" value="1"/>
</dbReference>
<dbReference type="PROSITE" id="PS00922">
    <property type="entry name" value="TRANSGLYCOSYLASE"/>
    <property type="match status" value="1"/>
</dbReference>
<organism>
    <name type="scientific">Cronobacter sakazakii (strain ATCC BAA-894)</name>
    <name type="common">Enterobacter sakazakii</name>
    <dbReference type="NCBI Taxonomy" id="290339"/>
    <lineage>
        <taxon>Bacteria</taxon>
        <taxon>Pseudomonadati</taxon>
        <taxon>Pseudomonadota</taxon>
        <taxon>Gammaproteobacteria</taxon>
        <taxon>Enterobacterales</taxon>
        <taxon>Enterobacteriaceae</taxon>
        <taxon>Cronobacter</taxon>
    </lineage>
</organism>
<accession>A7MKC3</accession>
<reference key="1">
    <citation type="journal article" date="2010" name="PLoS ONE">
        <title>Genome sequence of Cronobacter sakazakii BAA-894 and comparative genomic hybridization analysis with other Cronobacter species.</title>
        <authorList>
            <person name="Kucerova E."/>
            <person name="Clifton S.W."/>
            <person name="Xia X.Q."/>
            <person name="Long F."/>
            <person name="Porwollik S."/>
            <person name="Fulton L."/>
            <person name="Fronick C."/>
            <person name="Minx P."/>
            <person name="Kyung K."/>
            <person name="Warren W."/>
            <person name="Fulton R."/>
            <person name="Feng D."/>
            <person name="Wollam A."/>
            <person name="Shah N."/>
            <person name="Bhonagiri V."/>
            <person name="Nash W.E."/>
            <person name="Hallsworth-Pepin K."/>
            <person name="Wilson R.K."/>
            <person name="McClelland M."/>
            <person name="Forsythe S.J."/>
        </authorList>
    </citation>
    <scope>NUCLEOTIDE SEQUENCE [LARGE SCALE GENOMIC DNA]</scope>
    <source>
        <strain>ATCC BAA-894</strain>
    </source>
</reference>
<keyword id="KW-0998">Cell outer membrane</keyword>
<keyword id="KW-0961">Cell wall biogenesis/degradation</keyword>
<keyword id="KW-0449">Lipoprotein</keyword>
<keyword id="KW-0456">Lyase</keyword>
<keyword id="KW-0472">Membrane</keyword>
<keyword id="KW-0564">Palmitate</keyword>
<keyword id="KW-1185">Reference proteome</keyword>
<keyword id="KW-0732">Signal</keyword>
<name>EMTA_CROS8</name>
<evidence type="ECO:0000255" key="1">
    <source>
        <dbReference type="HAMAP-Rule" id="MF_01381"/>
    </source>
</evidence>
<evidence type="ECO:0000305" key="2"/>
<gene>
    <name evidence="1" type="primary">emtA</name>
    <name type="ordered locus">ESA_01475</name>
</gene>
<comment type="function">
    <text evidence="1">Murein-degrading enzyme. May play a role in recycling of muropeptides during cell elongation and/or cell division. Preferentially cleaves at a distance of more than two disaccharide units from the ends of the glycan chain.</text>
</comment>
<comment type="catalytic activity">
    <reaction evidence="1">
        <text>Endolytic cleavage of the (1-&gt;4)-beta-glycosidic linkage between N-acetylmuramic acid (MurNAc) and N-acetylglucosamine (GlcNAc) residues in peptidoglycan with concomitant formation of a 1,6-anhydrobond in the MurNAc residue.</text>
        <dbReference type="EC" id="4.2.2.n2"/>
    </reaction>
</comment>
<comment type="subcellular location">
    <subcellularLocation>
        <location evidence="1">Cell outer membrane</location>
        <topology evidence="1">Lipid-anchor</topology>
    </subcellularLocation>
</comment>
<comment type="similarity">
    <text evidence="1">Belongs to the transglycosylase Slt family.</text>
</comment>
<comment type="sequence caution" evidence="2">
    <conflict type="erroneous initiation">
        <sequence resource="EMBL-CDS" id="ABU76733"/>
    </conflict>
</comment>
<proteinExistence type="inferred from homology"/>
<feature type="signal peptide" evidence="1">
    <location>
        <begin position="1"/>
        <end position="15"/>
    </location>
</feature>
<feature type="chain" id="PRO_0000312904" description="Endo-type membrane-bound lytic murein transglycosylase A">
    <location>
        <begin position="16"/>
        <end position="203"/>
    </location>
</feature>
<feature type="lipid moiety-binding region" description="N-palmitoyl cysteine" evidence="1">
    <location>
        <position position="16"/>
    </location>
</feature>
<feature type="lipid moiety-binding region" description="S-diacylglycerol cysteine" evidence="1">
    <location>
        <position position="16"/>
    </location>
</feature>
<protein>
    <recommendedName>
        <fullName evidence="1">Endo-type membrane-bound lytic murein transglycosylase A</fullName>
        <ecNumber evidence="1">4.2.2.n2</ecNumber>
    </recommendedName>
    <alternativeName>
        <fullName evidence="1">Peptidoglycan lytic endotransglycosylase</fullName>
    </alternativeName>
</protein>
<sequence>MKLRWLMWLVVFLAGCSSTPDYKNPPWNPEVPVKRAMQWMPITEKAGNAWGVSPRLVTAIIAVESGGNPTLVSKSNAVGLMQIKASTAGREVYRYMGWSGQPSSSELKNPERNISIGTAYLSILEHGVLKGIEAPETMQYALVVSYVNGAGALLRTFSSDRKAAIEKINDLSPDEFVEHVAKNHPAPQAPRYIWKVQQAMNAM</sequence>